<proteinExistence type="inferred from homology"/>
<dbReference type="EMBL" id="CP001186">
    <property type="protein sequence ID" value="ACK93856.1"/>
    <property type="molecule type" value="Genomic_DNA"/>
</dbReference>
<dbReference type="RefSeq" id="WP_000847214.1">
    <property type="nucleotide sequence ID" value="NC_011772.1"/>
</dbReference>
<dbReference type="SMR" id="B7IQV7"/>
<dbReference type="GeneID" id="64186571"/>
<dbReference type="KEGG" id="bcg:BCG9842_B5525"/>
<dbReference type="HOGENOM" id="CLU_084338_1_3_9"/>
<dbReference type="Proteomes" id="UP000006744">
    <property type="component" value="Chromosome"/>
</dbReference>
<dbReference type="GO" id="GO:0005886">
    <property type="term" value="C:plasma membrane"/>
    <property type="evidence" value="ECO:0007669"/>
    <property type="project" value="UniProtKB-SubCell"/>
</dbReference>
<dbReference type="GO" id="GO:0045259">
    <property type="term" value="C:proton-transporting ATP synthase complex"/>
    <property type="evidence" value="ECO:0007669"/>
    <property type="project" value="UniProtKB-KW"/>
</dbReference>
<dbReference type="GO" id="GO:0005524">
    <property type="term" value="F:ATP binding"/>
    <property type="evidence" value="ECO:0007669"/>
    <property type="project" value="UniProtKB-UniRule"/>
</dbReference>
<dbReference type="GO" id="GO:0046933">
    <property type="term" value="F:proton-transporting ATP synthase activity, rotational mechanism"/>
    <property type="evidence" value="ECO:0007669"/>
    <property type="project" value="UniProtKB-UniRule"/>
</dbReference>
<dbReference type="CDD" id="cd12152">
    <property type="entry name" value="F1-ATPase_delta"/>
    <property type="match status" value="1"/>
</dbReference>
<dbReference type="FunFam" id="1.20.5.440:FF:000001">
    <property type="entry name" value="ATP synthase epsilon chain"/>
    <property type="match status" value="1"/>
</dbReference>
<dbReference type="FunFam" id="2.60.15.10:FF:000001">
    <property type="entry name" value="ATP synthase epsilon chain"/>
    <property type="match status" value="1"/>
</dbReference>
<dbReference type="Gene3D" id="1.20.5.440">
    <property type="entry name" value="ATP synthase delta/epsilon subunit, C-terminal domain"/>
    <property type="match status" value="1"/>
</dbReference>
<dbReference type="Gene3D" id="2.60.15.10">
    <property type="entry name" value="F0F1 ATP synthase delta/epsilon subunit, N-terminal"/>
    <property type="match status" value="1"/>
</dbReference>
<dbReference type="HAMAP" id="MF_00530">
    <property type="entry name" value="ATP_synth_epsil_bac"/>
    <property type="match status" value="1"/>
</dbReference>
<dbReference type="InterPro" id="IPR036794">
    <property type="entry name" value="ATP_F1_dsu/esu_C_sf"/>
</dbReference>
<dbReference type="InterPro" id="IPR001469">
    <property type="entry name" value="ATP_synth_F1_dsu/esu"/>
</dbReference>
<dbReference type="InterPro" id="IPR020546">
    <property type="entry name" value="ATP_synth_F1_dsu/esu_N"/>
</dbReference>
<dbReference type="InterPro" id="IPR020547">
    <property type="entry name" value="ATP_synth_F1_esu_C"/>
</dbReference>
<dbReference type="InterPro" id="IPR036771">
    <property type="entry name" value="ATPsynth_dsu/esu_N"/>
</dbReference>
<dbReference type="NCBIfam" id="TIGR01216">
    <property type="entry name" value="ATP_synt_epsi"/>
    <property type="match status" value="1"/>
</dbReference>
<dbReference type="NCBIfam" id="NF001846">
    <property type="entry name" value="PRK00571.1-3"/>
    <property type="match status" value="1"/>
</dbReference>
<dbReference type="NCBIfam" id="NF009980">
    <property type="entry name" value="PRK13446.1"/>
    <property type="match status" value="1"/>
</dbReference>
<dbReference type="PANTHER" id="PTHR13822">
    <property type="entry name" value="ATP SYNTHASE DELTA/EPSILON CHAIN"/>
    <property type="match status" value="1"/>
</dbReference>
<dbReference type="PANTHER" id="PTHR13822:SF10">
    <property type="entry name" value="ATP SYNTHASE EPSILON CHAIN, CHLOROPLASTIC"/>
    <property type="match status" value="1"/>
</dbReference>
<dbReference type="Pfam" id="PF00401">
    <property type="entry name" value="ATP-synt_DE"/>
    <property type="match status" value="1"/>
</dbReference>
<dbReference type="Pfam" id="PF02823">
    <property type="entry name" value="ATP-synt_DE_N"/>
    <property type="match status" value="1"/>
</dbReference>
<dbReference type="SUPFAM" id="SSF46604">
    <property type="entry name" value="Epsilon subunit of F1F0-ATP synthase C-terminal domain"/>
    <property type="match status" value="1"/>
</dbReference>
<dbReference type="SUPFAM" id="SSF51344">
    <property type="entry name" value="Epsilon subunit of F1F0-ATP synthase N-terminal domain"/>
    <property type="match status" value="1"/>
</dbReference>
<comment type="function">
    <text evidence="1">Produces ATP from ADP in the presence of a proton gradient across the membrane.</text>
</comment>
<comment type="subunit">
    <text evidence="1">F-type ATPases have 2 components, CF(1) - the catalytic core - and CF(0) - the membrane proton channel. CF(1) has five subunits: alpha(3), beta(3), gamma(1), delta(1), epsilon(1). CF(0) has three main subunits: a, b and c.</text>
</comment>
<comment type="subcellular location">
    <subcellularLocation>
        <location evidence="1">Cell membrane</location>
        <topology evidence="1">Peripheral membrane protein</topology>
    </subcellularLocation>
</comment>
<comment type="similarity">
    <text evidence="1">Belongs to the ATPase epsilon chain family.</text>
</comment>
<accession>B7IQV7</accession>
<reference key="1">
    <citation type="submission" date="2008-10" db="EMBL/GenBank/DDBJ databases">
        <title>Genome sequence of Bacillus cereus G9842.</title>
        <authorList>
            <person name="Dodson R.J."/>
            <person name="Durkin A.S."/>
            <person name="Rosovitz M.J."/>
            <person name="Rasko D.A."/>
            <person name="Hoffmaster A."/>
            <person name="Ravel J."/>
            <person name="Sutton G."/>
        </authorList>
    </citation>
    <scope>NUCLEOTIDE SEQUENCE [LARGE SCALE GENOMIC DNA]</scope>
    <source>
        <strain>G9842</strain>
    </source>
</reference>
<gene>
    <name evidence="1" type="primary">atpC</name>
    <name type="ordered locus">BCG9842_B5525</name>
</gene>
<organism>
    <name type="scientific">Bacillus cereus (strain G9842)</name>
    <dbReference type="NCBI Taxonomy" id="405531"/>
    <lineage>
        <taxon>Bacteria</taxon>
        <taxon>Bacillati</taxon>
        <taxon>Bacillota</taxon>
        <taxon>Bacilli</taxon>
        <taxon>Bacillales</taxon>
        <taxon>Bacillaceae</taxon>
        <taxon>Bacillus</taxon>
        <taxon>Bacillus cereus group</taxon>
    </lineage>
</organism>
<feature type="chain" id="PRO_1000127824" description="ATP synthase epsilon chain">
    <location>
        <begin position="1"/>
        <end position="133"/>
    </location>
</feature>
<keyword id="KW-0066">ATP synthesis</keyword>
<keyword id="KW-1003">Cell membrane</keyword>
<keyword id="KW-0139">CF(1)</keyword>
<keyword id="KW-0375">Hydrogen ion transport</keyword>
<keyword id="KW-0406">Ion transport</keyword>
<keyword id="KW-0472">Membrane</keyword>
<keyword id="KW-0813">Transport</keyword>
<protein>
    <recommendedName>
        <fullName evidence="1">ATP synthase epsilon chain</fullName>
    </recommendedName>
    <alternativeName>
        <fullName evidence="1">ATP synthase F1 sector epsilon subunit</fullName>
    </alternativeName>
    <alternativeName>
        <fullName evidence="1">F-ATPase epsilon subunit</fullName>
    </alternativeName>
</protein>
<sequence>MKTFPVSIVTPDGPVYEKEVEMVSVKAESGEMGILPGHIPTVAPLKISAVRLKNGGHTDYVAVSGGFIEVRPDKVTVLSSSAEEANHIDIHRANEAKRRAEQRMQDKQAHVDFKRAEMALQRAVNRLNVSDMK</sequence>
<evidence type="ECO:0000255" key="1">
    <source>
        <dbReference type="HAMAP-Rule" id="MF_00530"/>
    </source>
</evidence>
<name>ATPE_BACC2</name>